<evidence type="ECO:0000255" key="1">
    <source>
        <dbReference type="HAMAP-Rule" id="MF_01347"/>
    </source>
</evidence>
<evidence type="ECO:0000256" key="2">
    <source>
        <dbReference type="SAM" id="MobiDB-lite"/>
    </source>
</evidence>
<accession>A6VWP9</accession>
<reference key="1">
    <citation type="submission" date="2007-06" db="EMBL/GenBank/DDBJ databases">
        <title>Complete sequence of Marinomonas sp. MWYL1.</title>
        <authorList>
            <consortium name="US DOE Joint Genome Institute"/>
            <person name="Copeland A."/>
            <person name="Lucas S."/>
            <person name="Lapidus A."/>
            <person name="Barry K."/>
            <person name="Glavina del Rio T."/>
            <person name="Dalin E."/>
            <person name="Tice H."/>
            <person name="Pitluck S."/>
            <person name="Kiss H."/>
            <person name="Brettin T."/>
            <person name="Bruce D."/>
            <person name="Detter J.C."/>
            <person name="Han C."/>
            <person name="Schmutz J."/>
            <person name="Larimer F."/>
            <person name="Land M."/>
            <person name="Hauser L."/>
            <person name="Kyrpides N."/>
            <person name="Kim E."/>
            <person name="Johnston A.W.B."/>
            <person name="Todd J.D."/>
            <person name="Rogers R."/>
            <person name="Wexler M."/>
            <person name="Bond P.L."/>
            <person name="Li Y."/>
            <person name="Richardson P."/>
        </authorList>
    </citation>
    <scope>NUCLEOTIDE SEQUENCE [LARGE SCALE GENOMIC DNA]</scope>
    <source>
        <strain>MWYL1</strain>
    </source>
</reference>
<sequence length="489" mass="53903">MPSTTSQNIGTVISIRGSVVDIRFDNISSDNQLPPIRTLLRTGKDNSIAIEVFSQLDDQRVRGIALTPTQGLARGMQVEDTGEPLQTPVGKGILSRMFDVFGNTIDKKDAPIDVEWRSVHNEPPPLARRSTKTEVFETGIKVIDVLMPLERGGKAGLFGGAGVGKTVLLTEMIHNMVGQHAGVSIFCGIGERCREGEELYREMKEAGVLDSMVMMFGQMNEPPGARFRVGHAALTMAEYFRDDEHRDVLLLMDNIFRFIQAGMEVSGLMGQMPARLGYQPTMGTELSQLEERIANTGSGAITSIQAVYVPADDFTDPAAVHTFSHLSASIVLSRKRASEGLYPAIDPLQSSSKMATPSIIGKRHYDLAQEIRRTLAQYSELKDIIAMLGMEQLSPEDRKVVGRARRLERFLTQPFFTTEQFTGMSGKLVSLDDALDGCERILQDEFEDYPESALYMIGAIDEAHEKSKKAAEDKPKAEEDEDATSLHDA</sequence>
<organism>
    <name type="scientific">Marinomonas sp. (strain MWYL1)</name>
    <dbReference type="NCBI Taxonomy" id="400668"/>
    <lineage>
        <taxon>Bacteria</taxon>
        <taxon>Pseudomonadati</taxon>
        <taxon>Pseudomonadota</taxon>
        <taxon>Gammaproteobacteria</taxon>
        <taxon>Oceanospirillales</taxon>
        <taxon>Oceanospirillaceae</taxon>
        <taxon>Marinomonas</taxon>
    </lineage>
</organism>
<gene>
    <name evidence="1" type="primary">atpD1</name>
    <name type="ordered locus">Mmwyl1_1954</name>
</gene>
<protein>
    <recommendedName>
        <fullName evidence="1">ATP synthase subunit beta 1</fullName>
        <ecNumber evidence="1">7.1.2.2</ecNumber>
    </recommendedName>
    <alternativeName>
        <fullName evidence="1">ATP synthase F1 sector subunit beta 1</fullName>
    </alternativeName>
    <alternativeName>
        <fullName evidence="1">F-ATPase subunit beta 1</fullName>
    </alternativeName>
</protein>
<proteinExistence type="inferred from homology"/>
<feature type="chain" id="PRO_0000339544" description="ATP synthase subunit beta 1">
    <location>
        <begin position="1"/>
        <end position="489"/>
    </location>
</feature>
<feature type="region of interest" description="Disordered" evidence="2">
    <location>
        <begin position="465"/>
        <end position="489"/>
    </location>
</feature>
<feature type="compositionally biased region" description="Basic and acidic residues" evidence="2">
    <location>
        <begin position="465"/>
        <end position="477"/>
    </location>
</feature>
<feature type="binding site" evidence="1">
    <location>
        <begin position="159"/>
        <end position="166"/>
    </location>
    <ligand>
        <name>ATP</name>
        <dbReference type="ChEBI" id="CHEBI:30616"/>
    </ligand>
</feature>
<keyword id="KW-0066">ATP synthesis</keyword>
<keyword id="KW-0067">ATP-binding</keyword>
<keyword id="KW-0997">Cell inner membrane</keyword>
<keyword id="KW-1003">Cell membrane</keyword>
<keyword id="KW-0139">CF(1)</keyword>
<keyword id="KW-0375">Hydrogen ion transport</keyword>
<keyword id="KW-0406">Ion transport</keyword>
<keyword id="KW-0472">Membrane</keyword>
<keyword id="KW-0547">Nucleotide-binding</keyword>
<keyword id="KW-1278">Translocase</keyword>
<keyword id="KW-0813">Transport</keyword>
<comment type="function">
    <text evidence="1">Produces ATP from ADP in the presence of a proton gradient across the membrane. The catalytic sites are hosted primarily by the beta subunits.</text>
</comment>
<comment type="catalytic activity">
    <reaction evidence="1">
        <text>ATP + H2O + 4 H(+)(in) = ADP + phosphate + 5 H(+)(out)</text>
        <dbReference type="Rhea" id="RHEA:57720"/>
        <dbReference type="ChEBI" id="CHEBI:15377"/>
        <dbReference type="ChEBI" id="CHEBI:15378"/>
        <dbReference type="ChEBI" id="CHEBI:30616"/>
        <dbReference type="ChEBI" id="CHEBI:43474"/>
        <dbReference type="ChEBI" id="CHEBI:456216"/>
        <dbReference type="EC" id="7.1.2.2"/>
    </reaction>
</comment>
<comment type="subunit">
    <text evidence="1">F-type ATPases have 2 components, CF(1) - the catalytic core - and CF(0) - the membrane proton channel. CF(1) has five subunits: alpha(3), beta(3), gamma(1), delta(1), epsilon(1). CF(0) has three main subunits: a(1), b(2) and c(9-12). The alpha and beta chains form an alternating ring which encloses part of the gamma chain. CF(1) is attached to CF(0) by a central stalk formed by the gamma and epsilon chains, while a peripheral stalk is formed by the delta and b chains.</text>
</comment>
<comment type="subcellular location">
    <subcellularLocation>
        <location evidence="1">Cell inner membrane</location>
        <topology evidence="1">Peripheral membrane protein</topology>
    </subcellularLocation>
</comment>
<comment type="similarity">
    <text evidence="1">Belongs to the ATPase alpha/beta chains family.</text>
</comment>
<dbReference type="EC" id="7.1.2.2" evidence="1"/>
<dbReference type="EMBL" id="CP000749">
    <property type="protein sequence ID" value="ABR70878.1"/>
    <property type="molecule type" value="Genomic_DNA"/>
</dbReference>
<dbReference type="SMR" id="A6VWP9"/>
<dbReference type="STRING" id="400668.Mmwyl1_1954"/>
<dbReference type="KEGG" id="mmw:Mmwyl1_1954"/>
<dbReference type="eggNOG" id="COG0055">
    <property type="taxonomic scope" value="Bacteria"/>
</dbReference>
<dbReference type="HOGENOM" id="CLU_022398_0_2_6"/>
<dbReference type="OrthoDB" id="9801639at2"/>
<dbReference type="GO" id="GO:0005886">
    <property type="term" value="C:plasma membrane"/>
    <property type="evidence" value="ECO:0007669"/>
    <property type="project" value="UniProtKB-SubCell"/>
</dbReference>
<dbReference type="GO" id="GO:0045259">
    <property type="term" value="C:proton-transporting ATP synthase complex"/>
    <property type="evidence" value="ECO:0007669"/>
    <property type="project" value="UniProtKB-KW"/>
</dbReference>
<dbReference type="GO" id="GO:0005524">
    <property type="term" value="F:ATP binding"/>
    <property type="evidence" value="ECO:0007669"/>
    <property type="project" value="UniProtKB-UniRule"/>
</dbReference>
<dbReference type="GO" id="GO:0016887">
    <property type="term" value="F:ATP hydrolysis activity"/>
    <property type="evidence" value="ECO:0007669"/>
    <property type="project" value="InterPro"/>
</dbReference>
<dbReference type="GO" id="GO:0046933">
    <property type="term" value="F:proton-transporting ATP synthase activity, rotational mechanism"/>
    <property type="evidence" value="ECO:0007669"/>
    <property type="project" value="UniProtKB-UniRule"/>
</dbReference>
<dbReference type="GO" id="GO:0046961">
    <property type="term" value="F:proton-transporting ATPase activity, rotational mechanism"/>
    <property type="evidence" value="ECO:0007669"/>
    <property type="project" value="InterPro"/>
</dbReference>
<dbReference type="CDD" id="cd18110">
    <property type="entry name" value="ATP-synt_F1_beta_C"/>
    <property type="match status" value="1"/>
</dbReference>
<dbReference type="CDD" id="cd18115">
    <property type="entry name" value="ATP-synt_F1_beta_N"/>
    <property type="match status" value="1"/>
</dbReference>
<dbReference type="CDD" id="cd01133">
    <property type="entry name" value="F1-ATPase_beta_CD"/>
    <property type="match status" value="1"/>
</dbReference>
<dbReference type="FunFam" id="1.10.1140.10:FF:000006">
    <property type="entry name" value="ATP synthase subunit beta"/>
    <property type="match status" value="1"/>
</dbReference>
<dbReference type="FunFam" id="3.40.50.300:FF:001630">
    <property type="entry name" value="ATP synthase subunit beta"/>
    <property type="match status" value="1"/>
</dbReference>
<dbReference type="Gene3D" id="2.40.10.170">
    <property type="match status" value="1"/>
</dbReference>
<dbReference type="Gene3D" id="1.10.1140.10">
    <property type="entry name" value="Bovine Mitochondrial F1-atpase, Atp Synthase Beta Chain, Chain D, domain 3"/>
    <property type="match status" value="1"/>
</dbReference>
<dbReference type="Gene3D" id="3.40.50.300">
    <property type="entry name" value="P-loop containing nucleotide triphosphate hydrolases"/>
    <property type="match status" value="1"/>
</dbReference>
<dbReference type="HAMAP" id="MF_01347">
    <property type="entry name" value="ATP_synth_beta_bact"/>
    <property type="match status" value="1"/>
</dbReference>
<dbReference type="InterPro" id="IPR003593">
    <property type="entry name" value="AAA+_ATPase"/>
</dbReference>
<dbReference type="InterPro" id="IPR017691">
    <property type="entry name" value="Alt_ATPase_F1_bsu"/>
</dbReference>
<dbReference type="InterPro" id="IPR055190">
    <property type="entry name" value="ATP-synt_VA_C"/>
</dbReference>
<dbReference type="InterPro" id="IPR005722">
    <property type="entry name" value="ATP_synth_F1_bsu"/>
</dbReference>
<dbReference type="InterPro" id="IPR020003">
    <property type="entry name" value="ATPase_a/bsu_AS"/>
</dbReference>
<dbReference type="InterPro" id="IPR050053">
    <property type="entry name" value="ATPase_alpha/beta_chains"/>
</dbReference>
<dbReference type="InterPro" id="IPR004100">
    <property type="entry name" value="ATPase_F1/V1/A1_a/bsu_N"/>
</dbReference>
<dbReference type="InterPro" id="IPR036121">
    <property type="entry name" value="ATPase_F1/V1/A1_a/bsu_N_sf"/>
</dbReference>
<dbReference type="InterPro" id="IPR000194">
    <property type="entry name" value="ATPase_F1/V1/A1_a/bsu_nucl-bd"/>
</dbReference>
<dbReference type="InterPro" id="IPR024034">
    <property type="entry name" value="ATPase_F1/V1_b/a_C"/>
</dbReference>
<dbReference type="InterPro" id="IPR027417">
    <property type="entry name" value="P-loop_NTPase"/>
</dbReference>
<dbReference type="NCBIfam" id="TIGR03305">
    <property type="entry name" value="alt_F1F0_F1_bet"/>
    <property type="match status" value="1"/>
</dbReference>
<dbReference type="NCBIfam" id="TIGR01039">
    <property type="entry name" value="atpD"/>
    <property type="match status" value="1"/>
</dbReference>
<dbReference type="PANTHER" id="PTHR15184">
    <property type="entry name" value="ATP SYNTHASE"/>
    <property type="match status" value="1"/>
</dbReference>
<dbReference type="PANTHER" id="PTHR15184:SF71">
    <property type="entry name" value="ATP SYNTHASE SUBUNIT BETA, MITOCHONDRIAL"/>
    <property type="match status" value="1"/>
</dbReference>
<dbReference type="Pfam" id="PF00006">
    <property type="entry name" value="ATP-synt_ab"/>
    <property type="match status" value="1"/>
</dbReference>
<dbReference type="Pfam" id="PF02874">
    <property type="entry name" value="ATP-synt_ab_N"/>
    <property type="match status" value="1"/>
</dbReference>
<dbReference type="Pfam" id="PF22919">
    <property type="entry name" value="ATP-synt_VA_C"/>
    <property type="match status" value="1"/>
</dbReference>
<dbReference type="SMART" id="SM00382">
    <property type="entry name" value="AAA"/>
    <property type="match status" value="1"/>
</dbReference>
<dbReference type="SUPFAM" id="SSF47917">
    <property type="entry name" value="C-terminal domain of alpha and beta subunits of F1 ATP synthase"/>
    <property type="match status" value="1"/>
</dbReference>
<dbReference type="SUPFAM" id="SSF50615">
    <property type="entry name" value="N-terminal domain of alpha and beta subunits of F1 ATP synthase"/>
    <property type="match status" value="1"/>
</dbReference>
<dbReference type="SUPFAM" id="SSF52540">
    <property type="entry name" value="P-loop containing nucleoside triphosphate hydrolases"/>
    <property type="match status" value="1"/>
</dbReference>
<dbReference type="PROSITE" id="PS00152">
    <property type="entry name" value="ATPASE_ALPHA_BETA"/>
    <property type="match status" value="1"/>
</dbReference>
<name>ATPB1_MARMS</name>